<dbReference type="EMBL" id="BA000016">
    <property type="protein sequence ID" value="BAB81896.1"/>
    <property type="molecule type" value="Genomic_DNA"/>
</dbReference>
<dbReference type="RefSeq" id="WP_003457416.1">
    <property type="nucleotide sequence ID" value="NC_003366.1"/>
</dbReference>
<dbReference type="SMR" id="Q8XID1"/>
<dbReference type="STRING" id="195102.gene:10491469"/>
<dbReference type="KEGG" id="cpe:CPE2190"/>
<dbReference type="HOGENOM" id="CLU_085114_4_0_9"/>
<dbReference type="Proteomes" id="UP000000818">
    <property type="component" value="Chromosome"/>
</dbReference>
<dbReference type="GO" id="GO:0005886">
    <property type="term" value="C:plasma membrane"/>
    <property type="evidence" value="ECO:0007669"/>
    <property type="project" value="UniProtKB-SubCell"/>
</dbReference>
<dbReference type="GO" id="GO:0045259">
    <property type="term" value="C:proton-transporting ATP synthase complex"/>
    <property type="evidence" value="ECO:0007669"/>
    <property type="project" value="UniProtKB-KW"/>
</dbReference>
<dbReference type="GO" id="GO:0046933">
    <property type="term" value="F:proton-transporting ATP synthase activity, rotational mechanism"/>
    <property type="evidence" value="ECO:0007669"/>
    <property type="project" value="UniProtKB-UniRule"/>
</dbReference>
<dbReference type="Gene3D" id="1.10.520.20">
    <property type="entry name" value="N-terminal domain of the delta subunit of the F1F0-ATP synthase"/>
    <property type="match status" value="1"/>
</dbReference>
<dbReference type="HAMAP" id="MF_01416">
    <property type="entry name" value="ATP_synth_delta_bact"/>
    <property type="match status" value="1"/>
</dbReference>
<dbReference type="InterPro" id="IPR026015">
    <property type="entry name" value="ATP_synth_OSCP/delta_N_sf"/>
</dbReference>
<dbReference type="InterPro" id="IPR020781">
    <property type="entry name" value="ATPase_OSCP/d_CS"/>
</dbReference>
<dbReference type="InterPro" id="IPR000711">
    <property type="entry name" value="ATPase_OSCP/dsu"/>
</dbReference>
<dbReference type="NCBIfam" id="TIGR01145">
    <property type="entry name" value="ATP_synt_delta"/>
    <property type="match status" value="1"/>
</dbReference>
<dbReference type="NCBIfam" id="NF004403">
    <property type="entry name" value="PRK05758.2-4"/>
    <property type="match status" value="1"/>
</dbReference>
<dbReference type="PANTHER" id="PTHR11910">
    <property type="entry name" value="ATP SYNTHASE DELTA CHAIN"/>
    <property type="match status" value="1"/>
</dbReference>
<dbReference type="Pfam" id="PF00213">
    <property type="entry name" value="OSCP"/>
    <property type="match status" value="1"/>
</dbReference>
<dbReference type="PRINTS" id="PR00125">
    <property type="entry name" value="ATPASEDELTA"/>
</dbReference>
<dbReference type="SUPFAM" id="SSF47928">
    <property type="entry name" value="N-terminal domain of the delta subunit of the F1F0-ATP synthase"/>
    <property type="match status" value="1"/>
</dbReference>
<dbReference type="PROSITE" id="PS00389">
    <property type="entry name" value="ATPASE_DELTA"/>
    <property type="match status" value="1"/>
</dbReference>
<comment type="function">
    <text evidence="1">F(1)F(0) ATP synthase produces ATP from ADP in the presence of a proton or sodium gradient. F-type ATPases consist of two structural domains, F(1) containing the extramembraneous catalytic core and F(0) containing the membrane proton channel, linked together by a central stalk and a peripheral stalk. During catalysis, ATP synthesis in the catalytic domain of F(1) is coupled via a rotary mechanism of the central stalk subunits to proton translocation.</text>
</comment>
<comment type="function">
    <text evidence="1">This protein is part of the stalk that links CF(0) to CF(1). It either transmits conformational changes from CF(0) to CF(1) or is implicated in proton conduction.</text>
</comment>
<comment type="subunit">
    <text evidence="1">F-type ATPases have 2 components, F(1) - the catalytic core - and F(0) - the membrane proton channel. F(1) has five subunits: alpha(3), beta(3), gamma(1), delta(1), epsilon(1). F(0) has three main subunits: a(1), b(2) and c(10-14). The alpha and beta chains form an alternating ring which encloses part of the gamma chain. F(1) is attached to F(0) by a central stalk formed by the gamma and epsilon chains, while a peripheral stalk is formed by the delta and b chains.</text>
</comment>
<comment type="subcellular location">
    <subcellularLocation>
        <location evidence="1">Cell membrane</location>
        <topology evidence="1">Peripheral membrane protein</topology>
    </subcellularLocation>
</comment>
<comment type="similarity">
    <text evidence="1">Belongs to the ATPase delta chain family.</text>
</comment>
<protein>
    <recommendedName>
        <fullName evidence="1">ATP synthase subunit delta</fullName>
    </recommendedName>
    <alternativeName>
        <fullName evidence="1">ATP synthase F(1) sector subunit delta</fullName>
    </alternativeName>
    <alternativeName>
        <fullName evidence="1">F-type ATPase subunit delta</fullName>
        <shortName evidence="1">F-ATPase subunit delta</shortName>
    </alternativeName>
</protein>
<proteinExistence type="inferred from homology"/>
<reference key="1">
    <citation type="journal article" date="2002" name="Proc. Natl. Acad. Sci. U.S.A.">
        <title>Complete genome sequence of Clostridium perfringens, an anaerobic flesh-eater.</title>
        <authorList>
            <person name="Shimizu T."/>
            <person name="Ohtani K."/>
            <person name="Hirakawa H."/>
            <person name="Ohshima K."/>
            <person name="Yamashita A."/>
            <person name="Shiba T."/>
            <person name="Ogasawara N."/>
            <person name="Hattori M."/>
            <person name="Kuhara S."/>
            <person name="Hayashi H."/>
        </authorList>
    </citation>
    <scope>NUCLEOTIDE SEQUENCE [LARGE SCALE GENOMIC DNA]</scope>
    <source>
        <strain>13 / Type A</strain>
    </source>
</reference>
<organism>
    <name type="scientific">Clostridium perfringens (strain 13 / Type A)</name>
    <dbReference type="NCBI Taxonomy" id="195102"/>
    <lineage>
        <taxon>Bacteria</taxon>
        <taxon>Bacillati</taxon>
        <taxon>Bacillota</taxon>
        <taxon>Clostridia</taxon>
        <taxon>Eubacteriales</taxon>
        <taxon>Clostridiaceae</taxon>
        <taxon>Clostridium</taxon>
    </lineage>
</organism>
<accession>Q8XID1</accession>
<gene>
    <name evidence="1" type="primary">atpH</name>
    <name type="ordered locus">CPE2190</name>
</gene>
<name>ATPD_CLOPE</name>
<keyword id="KW-0066">ATP synthesis</keyword>
<keyword id="KW-1003">Cell membrane</keyword>
<keyword id="KW-0139">CF(1)</keyword>
<keyword id="KW-0375">Hydrogen ion transport</keyword>
<keyword id="KW-0406">Ion transport</keyword>
<keyword id="KW-0472">Membrane</keyword>
<keyword id="KW-1185">Reference proteome</keyword>
<keyword id="KW-0813">Transport</keyword>
<feature type="chain" id="PRO_0000370950" description="ATP synthase subunit delta">
    <location>
        <begin position="1"/>
        <end position="179"/>
    </location>
</feature>
<evidence type="ECO:0000255" key="1">
    <source>
        <dbReference type="HAMAP-Rule" id="MF_01416"/>
    </source>
</evidence>
<sequence length="179" mass="21274">MYEYLDRRYALALYEVAEEKNKVEEYLNDLREICDIIYGNNELYEIIKHPQISTVRKKKTFRNIFEGKIDDELLSFLMVLIEKDRILYLREKLKEMEKIHLERNNTLLAEVKSVVPLTEDEVTRLVAKLENKYSKKILLKQEIDKSIIGGLYVRVGDDVIDGTVKSRLDDMKQIMLKRE</sequence>